<sequence>MRCPKCSSEESKVVDSRQAEDAIRRRRVCESCGFRFTTFERIEEMPLLVIKKDDKREPFNREKIVRGLVRSAYKRPVSSEDIETTVANVERKIRQLDSNEVESDVIGEFVMQELAELDDITYIRFASVYRSFKDVSELEELLKNITKK</sequence>
<evidence type="ECO:0000255" key="1">
    <source>
        <dbReference type="HAMAP-Rule" id="MF_00440"/>
    </source>
</evidence>
<organism>
    <name type="scientific">Lactococcus lactis subsp. cremoris (strain SK11)</name>
    <dbReference type="NCBI Taxonomy" id="272622"/>
    <lineage>
        <taxon>Bacteria</taxon>
        <taxon>Bacillati</taxon>
        <taxon>Bacillota</taxon>
        <taxon>Bacilli</taxon>
        <taxon>Lactobacillales</taxon>
        <taxon>Streptococcaceae</taxon>
        <taxon>Lactococcus</taxon>
        <taxon>Lactococcus cremoris subsp. cremoris</taxon>
    </lineage>
</organism>
<keyword id="KW-0067">ATP-binding</keyword>
<keyword id="KW-0238">DNA-binding</keyword>
<keyword id="KW-0479">Metal-binding</keyword>
<keyword id="KW-0547">Nucleotide-binding</keyword>
<keyword id="KW-0678">Repressor</keyword>
<keyword id="KW-0804">Transcription</keyword>
<keyword id="KW-0805">Transcription regulation</keyword>
<keyword id="KW-0862">Zinc</keyword>
<keyword id="KW-0863">Zinc-finger</keyword>
<reference key="1">
    <citation type="journal article" date="2006" name="Proc. Natl. Acad. Sci. U.S.A.">
        <title>Comparative genomics of the lactic acid bacteria.</title>
        <authorList>
            <person name="Makarova K.S."/>
            <person name="Slesarev A."/>
            <person name="Wolf Y.I."/>
            <person name="Sorokin A."/>
            <person name="Mirkin B."/>
            <person name="Koonin E.V."/>
            <person name="Pavlov A."/>
            <person name="Pavlova N."/>
            <person name="Karamychev V."/>
            <person name="Polouchine N."/>
            <person name="Shakhova V."/>
            <person name="Grigoriev I."/>
            <person name="Lou Y."/>
            <person name="Rohksar D."/>
            <person name="Lucas S."/>
            <person name="Huang K."/>
            <person name="Goodstein D.M."/>
            <person name="Hawkins T."/>
            <person name="Plengvidhya V."/>
            <person name="Welker D."/>
            <person name="Hughes J."/>
            <person name="Goh Y."/>
            <person name="Benson A."/>
            <person name="Baldwin K."/>
            <person name="Lee J.-H."/>
            <person name="Diaz-Muniz I."/>
            <person name="Dosti B."/>
            <person name="Smeianov V."/>
            <person name="Wechter W."/>
            <person name="Barabote R."/>
            <person name="Lorca G."/>
            <person name="Altermann E."/>
            <person name="Barrangou R."/>
            <person name="Ganesan B."/>
            <person name="Xie Y."/>
            <person name="Rawsthorne H."/>
            <person name="Tamir D."/>
            <person name="Parker C."/>
            <person name="Breidt F."/>
            <person name="Broadbent J.R."/>
            <person name="Hutkins R."/>
            <person name="O'Sullivan D."/>
            <person name="Steele J."/>
            <person name="Unlu G."/>
            <person name="Saier M.H. Jr."/>
            <person name="Klaenhammer T."/>
            <person name="Richardson P."/>
            <person name="Kozyavkin S."/>
            <person name="Weimer B.C."/>
            <person name="Mills D.A."/>
        </authorList>
    </citation>
    <scope>NUCLEOTIDE SEQUENCE [LARGE SCALE GENOMIC DNA]</scope>
    <source>
        <strain>SK11</strain>
    </source>
</reference>
<comment type="function">
    <text evidence="1">Negatively regulates transcription of bacterial ribonucleotide reductase nrd genes and operons by binding to NrdR-boxes.</text>
</comment>
<comment type="cofactor">
    <cofactor evidence="1">
        <name>Zn(2+)</name>
        <dbReference type="ChEBI" id="CHEBI:29105"/>
    </cofactor>
    <text evidence="1">Binds 1 zinc ion.</text>
</comment>
<comment type="similarity">
    <text evidence="1">Belongs to the NrdR family.</text>
</comment>
<protein>
    <recommendedName>
        <fullName evidence="1">Transcriptional repressor NrdR</fullName>
    </recommendedName>
</protein>
<name>NRDR_LACLS</name>
<feature type="chain" id="PRO_1000080768" description="Transcriptional repressor NrdR">
    <location>
        <begin position="1"/>
        <end position="148"/>
    </location>
</feature>
<feature type="domain" description="ATP-cone" evidence="1">
    <location>
        <begin position="47"/>
        <end position="137"/>
    </location>
</feature>
<feature type="zinc finger region" evidence="1">
    <location>
        <begin position="3"/>
        <end position="32"/>
    </location>
</feature>
<gene>
    <name evidence="1" type="primary">nrdR</name>
    <name type="ordered locus">LACR_0794</name>
</gene>
<proteinExistence type="inferred from homology"/>
<dbReference type="EMBL" id="CP000425">
    <property type="protein sequence ID" value="ABJ72351.1"/>
    <property type="molecule type" value="Genomic_DNA"/>
</dbReference>
<dbReference type="RefSeq" id="WP_003132469.1">
    <property type="nucleotide sequence ID" value="NC_008527.1"/>
</dbReference>
<dbReference type="SMR" id="Q030M1"/>
<dbReference type="GeneID" id="89632883"/>
<dbReference type="KEGG" id="llc:LACR_0794"/>
<dbReference type="HOGENOM" id="CLU_108412_0_0_9"/>
<dbReference type="Proteomes" id="UP000000240">
    <property type="component" value="Chromosome"/>
</dbReference>
<dbReference type="GO" id="GO:0005524">
    <property type="term" value="F:ATP binding"/>
    <property type="evidence" value="ECO:0007669"/>
    <property type="project" value="UniProtKB-KW"/>
</dbReference>
<dbReference type="GO" id="GO:0003677">
    <property type="term" value="F:DNA binding"/>
    <property type="evidence" value="ECO:0007669"/>
    <property type="project" value="UniProtKB-KW"/>
</dbReference>
<dbReference type="GO" id="GO:0008270">
    <property type="term" value="F:zinc ion binding"/>
    <property type="evidence" value="ECO:0007669"/>
    <property type="project" value="UniProtKB-KW"/>
</dbReference>
<dbReference type="GO" id="GO:0045892">
    <property type="term" value="P:negative regulation of DNA-templated transcription"/>
    <property type="evidence" value="ECO:0007669"/>
    <property type="project" value="UniProtKB-UniRule"/>
</dbReference>
<dbReference type="HAMAP" id="MF_00440">
    <property type="entry name" value="NrdR"/>
    <property type="match status" value="1"/>
</dbReference>
<dbReference type="InterPro" id="IPR005144">
    <property type="entry name" value="ATP-cone_dom"/>
</dbReference>
<dbReference type="InterPro" id="IPR055173">
    <property type="entry name" value="NrdR-like_N"/>
</dbReference>
<dbReference type="InterPro" id="IPR003796">
    <property type="entry name" value="RNR_NrdR-like"/>
</dbReference>
<dbReference type="NCBIfam" id="TIGR00244">
    <property type="entry name" value="transcriptional regulator NrdR"/>
    <property type="match status" value="1"/>
</dbReference>
<dbReference type="PANTHER" id="PTHR30455">
    <property type="entry name" value="TRANSCRIPTIONAL REPRESSOR NRDR"/>
    <property type="match status" value="1"/>
</dbReference>
<dbReference type="PANTHER" id="PTHR30455:SF2">
    <property type="entry name" value="TRANSCRIPTIONAL REPRESSOR NRDR"/>
    <property type="match status" value="1"/>
</dbReference>
<dbReference type="Pfam" id="PF03477">
    <property type="entry name" value="ATP-cone"/>
    <property type="match status" value="1"/>
</dbReference>
<dbReference type="Pfam" id="PF22811">
    <property type="entry name" value="Zn_ribbon_NrdR"/>
    <property type="match status" value="1"/>
</dbReference>
<dbReference type="PROSITE" id="PS51161">
    <property type="entry name" value="ATP_CONE"/>
    <property type="match status" value="1"/>
</dbReference>
<accession>Q030M1</accession>